<accession>A3NE92</accession>
<organism>
    <name type="scientific">Burkholderia pseudomallei (strain 668)</name>
    <dbReference type="NCBI Taxonomy" id="320373"/>
    <lineage>
        <taxon>Bacteria</taxon>
        <taxon>Pseudomonadati</taxon>
        <taxon>Pseudomonadota</taxon>
        <taxon>Betaproteobacteria</taxon>
        <taxon>Burkholderiales</taxon>
        <taxon>Burkholderiaceae</taxon>
        <taxon>Burkholderia</taxon>
        <taxon>pseudomallei group</taxon>
    </lineage>
</organism>
<name>HIS3_BURP6</name>
<evidence type="ECO:0000255" key="1">
    <source>
        <dbReference type="HAMAP-Rule" id="MF_01021"/>
    </source>
</evidence>
<proteinExistence type="inferred from homology"/>
<dbReference type="EC" id="3.5.4.19" evidence="1"/>
<dbReference type="EMBL" id="CP000570">
    <property type="protein sequence ID" value="ABN82177.1"/>
    <property type="molecule type" value="Genomic_DNA"/>
</dbReference>
<dbReference type="RefSeq" id="WP_004201279.1">
    <property type="nucleotide sequence ID" value="NC_009074.1"/>
</dbReference>
<dbReference type="SMR" id="A3NE92"/>
<dbReference type="GeneID" id="93061749"/>
<dbReference type="KEGG" id="bpd:BURPS668_3659"/>
<dbReference type="HOGENOM" id="CLU_048577_5_0_4"/>
<dbReference type="UniPathway" id="UPA00031">
    <property type="reaction ID" value="UER00008"/>
</dbReference>
<dbReference type="GO" id="GO:0005737">
    <property type="term" value="C:cytoplasm"/>
    <property type="evidence" value="ECO:0007669"/>
    <property type="project" value="UniProtKB-SubCell"/>
</dbReference>
<dbReference type="GO" id="GO:0000287">
    <property type="term" value="F:magnesium ion binding"/>
    <property type="evidence" value="ECO:0007669"/>
    <property type="project" value="UniProtKB-UniRule"/>
</dbReference>
<dbReference type="GO" id="GO:0004635">
    <property type="term" value="F:phosphoribosyl-AMP cyclohydrolase activity"/>
    <property type="evidence" value="ECO:0007669"/>
    <property type="project" value="UniProtKB-UniRule"/>
</dbReference>
<dbReference type="GO" id="GO:0008270">
    <property type="term" value="F:zinc ion binding"/>
    <property type="evidence" value="ECO:0007669"/>
    <property type="project" value="UniProtKB-UniRule"/>
</dbReference>
<dbReference type="GO" id="GO:0000105">
    <property type="term" value="P:L-histidine biosynthetic process"/>
    <property type="evidence" value="ECO:0007669"/>
    <property type="project" value="UniProtKB-UniRule"/>
</dbReference>
<dbReference type="FunFam" id="3.10.20.810:FF:000001">
    <property type="entry name" value="Histidine biosynthesis bifunctional protein HisIE"/>
    <property type="match status" value="1"/>
</dbReference>
<dbReference type="Gene3D" id="3.10.20.810">
    <property type="entry name" value="Phosphoribosyl-AMP cyclohydrolase"/>
    <property type="match status" value="1"/>
</dbReference>
<dbReference type="HAMAP" id="MF_01021">
    <property type="entry name" value="HisI"/>
    <property type="match status" value="1"/>
</dbReference>
<dbReference type="InterPro" id="IPR026660">
    <property type="entry name" value="PRA-CH"/>
</dbReference>
<dbReference type="InterPro" id="IPR002496">
    <property type="entry name" value="PRib_AMP_CycHydrolase_dom"/>
</dbReference>
<dbReference type="InterPro" id="IPR038019">
    <property type="entry name" value="PRib_AMP_CycHydrolase_sf"/>
</dbReference>
<dbReference type="NCBIfam" id="NF000768">
    <property type="entry name" value="PRK00051.1"/>
    <property type="match status" value="1"/>
</dbReference>
<dbReference type="PANTHER" id="PTHR42945">
    <property type="entry name" value="HISTIDINE BIOSYNTHESIS BIFUNCTIONAL PROTEIN"/>
    <property type="match status" value="1"/>
</dbReference>
<dbReference type="PANTHER" id="PTHR42945:SF1">
    <property type="entry name" value="HISTIDINE BIOSYNTHESIS BIFUNCTIONAL PROTEIN HIS7"/>
    <property type="match status" value="1"/>
</dbReference>
<dbReference type="Pfam" id="PF01502">
    <property type="entry name" value="PRA-CH"/>
    <property type="match status" value="1"/>
</dbReference>
<dbReference type="SUPFAM" id="SSF141734">
    <property type="entry name" value="HisI-like"/>
    <property type="match status" value="1"/>
</dbReference>
<feature type="chain" id="PRO_1000063398" description="Phosphoribosyl-AMP cyclohydrolase">
    <location>
        <begin position="1"/>
        <end position="137"/>
    </location>
</feature>
<feature type="binding site" evidence="1">
    <location>
        <position position="83"/>
    </location>
    <ligand>
        <name>Mg(2+)</name>
        <dbReference type="ChEBI" id="CHEBI:18420"/>
    </ligand>
</feature>
<feature type="binding site" evidence="1">
    <location>
        <position position="84"/>
    </location>
    <ligand>
        <name>Zn(2+)</name>
        <dbReference type="ChEBI" id="CHEBI:29105"/>
        <note>ligand shared between dimeric partners</note>
    </ligand>
</feature>
<feature type="binding site" evidence="1">
    <location>
        <position position="85"/>
    </location>
    <ligand>
        <name>Mg(2+)</name>
        <dbReference type="ChEBI" id="CHEBI:18420"/>
    </ligand>
</feature>
<feature type="binding site" evidence="1">
    <location>
        <position position="87"/>
    </location>
    <ligand>
        <name>Mg(2+)</name>
        <dbReference type="ChEBI" id="CHEBI:18420"/>
    </ligand>
</feature>
<feature type="binding site" evidence="1">
    <location>
        <position position="101"/>
    </location>
    <ligand>
        <name>Zn(2+)</name>
        <dbReference type="ChEBI" id="CHEBI:29105"/>
        <note>ligand shared between dimeric partners</note>
    </ligand>
</feature>
<feature type="binding site" evidence="1">
    <location>
        <position position="108"/>
    </location>
    <ligand>
        <name>Zn(2+)</name>
        <dbReference type="ChEBI" id="CHEBI:29105"/>
        <note>ligand shared between dimeric partners</note>
    </ligand>
</feature>
<comment type="function">
    <text evidence="1">Catalyzes the hydrolysis of the adenine ring of phosphoribosyl-AMP.</text>
</comment>
<comment type="catalytic activity">
    <reaction evidence="1">
        <text>1-(5-phospho-beta-D-ribosyl)-5'-AMP + H2O = 1-(5-phospho-beta-D-ribosyl)-5-[(5-phospho-beta-D-ribosylamino)methylideneamino]imidazole-4-carboxamide</text>
        <dbReference type="Rhea" id="RHEA:20049"/>
        <dbReference type="ChEBI" id="CHEBI:15377"/>
        <dbReference type="ChEBI" id="CHEBI:58435"/>
        <dbReference type="ChEBI" id="CHEBI:59457"/>
        <dbReference type="EC" id="3.5.4.19"/>
    </reaction>
</comment>
<comment type="cofactor">
    <cofactor evidence="1">
        <name>Mg(2+)</name>
        <dbReference type="ChEBI" id="CHEBI:18420"/>
    </cofactor>
    <text evidence="1">Binds 1 Mg(2+) ion per subunit.</text>
</comment>
<comment type="cofactor">
    <cofactor evidence="1">
        <name>Zn(2+)</name>
        <dbReference type="ChEBI" id="CHEBI:29105"/>
    </cofactor>
    <text evidence="1">Binds 1 zinc ion per subunit.</text>
</comment>
<comment type="pathway">
    <text evidence="1">Amino-acid biosynthesis; L-histidine biosynthesis; L-histidine from 5-phospho-alpha-D-ribose 1-diphosphate: step 3/9.</text>
</comment>
<comment type="subunit">
    <text evidence="1">Homodimer.</text>
</comment>
<comment type="subcellular location">
    <subcellularLocation>
        <location evidence="1">Cytoplasm</location>
    </subcellularLocation>
</comment>
<comment type="similarity">
    <text evidence="1">Belongs to the PRA-CH family.</text>
</comment>
<reference key="1">
    <citation type="journal article" date="2010" name="Genome Biol. Evol.">
        <title>Continuing evolution of Burkholderia mallei through genome reduction and large-scale rearrangements.</title>
        <authorList>
            <person name="Losada L."/>
            <person name="Ronning C.M."/>
            <person name="DeShazer D."/>
            <person name="Woods D."/>
            <person name="Fedorova N."/>
            <person name="Kim H.S."/>
            <person name="Shabalina S.A."/>
            <person name="Pearson T.R."/>
            <person name="Brinkac L."/>
            <person name="Tan P."/>
            <person name="Nandi T."/>
            <person name="Crabtree J."/>
            <person name="Badger J."/>
            <person name="Beckstrom-Sternberg S."/>
            <person name="Saqib M."/>
            <person name="Schutzer S.E."/>
            <person name="Keim P."/>
            <person name="Nierman W.C."/>
        </authorList>
    </citation>
    <scope>NUCLEOTIDE SEQUENCE [LARGE SCALE GENOMIC DNA]</scope>
    <source>
        <strain>668</strain>
    </source>
</reference>
<gene>
    <name evidence="1" type="primary">hisI</name>
    <name type="ordered locus">BURPS668_3659</name>
</gene>
<keyword id="KW-0028">Amino-acid biosynthesis</keyword>
<keyword id="KW-0963">Cytoplasm</keyword>
<keyword id="KW-0368">Histidine biosynthesis</keyword>
<keyword id="KW-0378">Hydrolase</keyword>
<keyword id="KW-0460">Magnesium</keyword>
<keyword id="KW-0479">Metal-binding</keyword>
<keyword id="KW-0862">Zinc</keyword>
<protein>
    <recommendedName>
        <fullName evidence="1">Phosphoribosyl-AMP cyclohydrolase</fullName>
        <shortName evidence="1">PRA-CH</shortName>
        <ecNumber evidence="1">3.5.4.19</ecNumber>
    </recommendedName>
</protein>
<sequence>MNAEAKPGDWLGKVRWDANGLVPVIAQDAATNDVLMFAWMNRDALAKTIELKRAVYYSRSRQRLWFKGEESGHVQHVHEVRLDCDEDVVLLKVEQVEGIACHTGRRSCFFQKFEGTVDDGEWVAVDPVLKDPEHIYK</sequence>